<dbReference type="EC" id="2.7.4.3" evidence="1"/>
<dbReference type="EMBL" id="U77912">
    <property type="protein sequence ID" value="AAD09879.1"/>
    <property type="molecule type" value="Genomic_DNA"/>
</dbReference>
<dbReference type="EMBL" id="LT708304">
    <property type="protein sequence ID" value="SIT99353.1"/>
    <property type="molecule type" value="Genomic_DNA"/>
</dbReference>
<dbReference type="RefSeq" id="NP_854412.1">
    <property type="nucleotide sequence ID" value="NC_002945.3"/>
</dbReference>
<dbReference type="RefSeq" id="WP_003403726.1">
    <property type="nucleotide sequence ID" value="NC_002945.4"/>
</dbReference>
<dbReference type="BMRB" id="P69439"/>
<dbReference type="SMR" id="P69439"/>
<dbReference type="KEGG" id="mbo:BQ2027_MB0754"/>
<dbReference type="PATRIC" id="fig|233413.5.peg.821"/>
<dbReference type="UniPathway" id="UPA00588">
    <property type="reaction ID" value="UER00649"/>
</dbReference>
<dbReference type="Proteomes" id="UP000001419">
    <property type="component" value="Chromosome"/>
</dbReference>
<dbReference type="GO" id="GO:0005737">
    <property type="term" value="C:cytoplasm"/>
    <property type="evidence" value="ECO:0007669"/>
    <property type="project" value="UniProtKB-SubCell"/>
</dbReference>
<dbReference type="GO" id="GO:0004017">
    <property type="term" value="F:adenylate kinase activity"/>
    <property type="evidence" value="ECO:0007669"/>
    <property type="project" value="UniProtKB-UniRule"/>
</dbReference>
<dbReference type="GO" id="GO:0005524">
    <property type="term" value="F:ATP binding"/>
    <property type="evidence" value="ECO:0007669"/>
    <property type="project" value="UniProtKB-UniRule"/>
</dbReference>
<dbReference type="GO" id="GO:0044209">
    <property type="term" value="P:AMP salvage"/>
    <property type="evidence" value="ECO:0007669"/>
    <property type="project" value="UniProtKB-UniRule"/>
</dbReference>
<dbReference type="CDD" id="cd01428">
    <property type="entry name" value="ADK"/>
    <property type="match status" value="1"/>
</dbReference>
<dbReference type="FunFam" id="3.40.50.300:FF:002170">
    <property type="entry name" value="Adenylate kinase"/>
    <property type="match status" value="1"/>
</dbReference>
<dbReference type="Gene3D" id="3.40.50.300">
    <property type="entry name" value="P-loop containing nucleotide triphosphate hydrolases"/>
    <property type="match status" value="1"/>
</dbReference>
<dbReference type="HAMAP" id="MF_00235">
    <property type="entry name" value="Adenylate_kinase_Adk"/>
    <property type="match status" value="1"/>
</dbReference>
<dbReference type="InterPro" id="IPR000850">
    <property type="entry name" value="Adenylat/UMP-CMP_kin"/>
</dbReference>
<dbReference type="InterPro" id="IPR033690">
    <property type="entry name" value="Adenylat_kinase_CS"/>
</dbReference>
<dbReference type="InterPro" id="IPR027417">
    <property type="entry name" value="P-loop_NTPase"/>
</dbReference>
<dbReference type="NCBIfam" id="NF001381">
    <property type="entry name" value="PRK00279.1-3"/>
    <property type="match status" value="1"/>
</dbReference>
<dbReference type="NCBIfam" id="NF011100">
    <property type="entry name" value="PRK14527.1"/>
    <property type="match status" value="1"/>
</dbReference>
<dbReference type="NCBIfam" id="NF011104">
    <property type="entry name" value="PRK14531.1"/>
    <property type="match status" value="1"/>
</dbReference>
<dbReference type="NCBIfam" id="NF011105">
    <property type="entry name" value="PRK14532.1"/>
    <property type="match status" value="1"/>
</dbReference>
<dbReference type="PANTHER" id="PTHR23359">
    <property type="entry name" value="NUCLEOTIDE KINASE"/>
    <property type="match status" value="1"/>
</dbReference>
<dbReference type="Pfam" id="PF00406">
    <property type="entry name" value="ADK"/>
    <property type="match status" value="1"/>
</dbReference>
<dbReference type="PRINTS" id="PR00094">
    <property type="entry name" value="ADENYLTKNASE"/>
</dbReference>
<dbReference type="SUPFAM" id="SSF52540">
    <property type="entry name" value="P-loop containing nucleoside triphosphate hydrolases"/>
    <property type="match status" value="1"/>
</dbReference>
<dbReference type="PROSITE" id="PS00113">
    <property type="entry name" value="ADENYLATE_KINASE"/>
    <property type="match status" value="1"/>
</dbReference>
<keyword id="KW-0067">ATP-binding</keyword>
<keyword id="KW-0963">Cytoplasm</keyword>
<keyword id="KW-0418">Kinase</keyword>
<keyword id="KW-0545">Nucleotide biosynthesis</keyword>
<keyword id="KW-0547">Nucleotide-binding</keyword>
<keyword id="KW-1185">Reference proteome</keyword>
<keyword id="KW-0808">Transferase</keyword>
<sequence>MRVLLLGPPGAGKGTQAVKLAEKLGIPQISTGELFRRNIEEGTKLGVEAKRYLDAGDLVPSDLTNELVDDRLNNPDAANGFILDGYPRSVEQAKALHEMLERRGTDIDAVLEFRVSEEVLLERLKGRGRADDTDDVILNRMKVYRDETAPLLEYYRDQLKTVDAVGTMDEVFARALRALGK</sequence>
<gene>
    <name evidence="1" type="primary">adk</name>
    <name type="ordered locus">BQ2027_MB0754</name>
</gene>
<name>KAD_MYCBO</name>
<protein>
    <recommendedName>
        <fullName evidence="1">Adenylate kinase</fullName>
        <shortName evidence="1">AK</shortName>
        <ecNumber evidence="1">2.7.4.3</ecNumber>
    </recommendedName>
    <alternativeName>
        <fullName evidence="1">ATP-AMP transphosphorylase</fullName>
    </alternativeName>
    <alternativeName>
        <fullName evidence="1">ATP:AMP phosphotransferase</fullName>
    </alternativeName>
    <alternativeName>
        <fullName evidence="1">Adenylate monophosphate kinase</fullName>
    </alternativeName>
</protein>
<reference key="1">
    <citation type="submission" date="1999-01" db="EMBL/GenBank/DDBJ databases">
        <title>Cloning and sequencing of Mycobacterium bovis BCG gene cluster containing secY gene.</title>
        <authorList>
            <person name="Kim J.K."/>
            <person name="Choe Y.K."/>
        </authorList>
    </citation>
    <scope>NUCLEOTIDE SEQUENCE [GENOMIC DNA]</scope>
    <source>
        <strain>BCG</strain>
    </source>
</reference>
<reference key="2">
    <citation type="journal article" date="2003" name="Proc. Natl. Acad. Sci. U.S.A.">
        <title>The complete genome sequence of Mycobacterium bovis.</title>
        <authorList>
            <person name="Garnier T."/>
            <person name="Eiglmeier K."/>
            <person name="Camus J.-C."/>
            <person name="Medina N."/>
            <person name="Mansoor H."/>
            <person name="Pryor M."/>
            <person name="Duthoy S."/>
            <person name="Grondin S."/>
            <person name="Lacroix C."/>
            <person name="Monsempe C."/>
            <person name="Simon S."/>
            <person name="Harris B."/>
            <person name="Atkin R."/>
            <person name="Doggett J."/>
            <person name="Mayes R."/>
            <person name="Keating L."/>
            <person name="Wheeler P.R."/>
            <person name="Parkhill J."/>
            <person name="Barrell B.G."/>
            <person name="Cole S.T."/>
            <person name="Gordon S.V."/>
            <person name="Hewinson R.G."/>
        </authorList>
    </citation>
    <scope>NUCLEOTIDE SEQUENCE [LARGE SCALE GENOMIC DNA]</scope>
    <source>
        <strain>ATCC BAA-935 / AF2122/97</strain>
    </source>
</reference>
<reference key="3">
    <citation type="journal article" date="2017" name="Genome Announc.">
        <title>Updated reference genome sequence and annotation of Mycobacterium bovis AF2122/97.</title>
        <authorList>
            <person name="Malone K.M."/>
            <person name="Farrell D."/>
            <person name="Stuber T.P."/>
            <person name="Schubert O.T."/>
            <person name="Aebersold R."/>
            <person name="Robbe-Austerman S."/>
            <person name="Gordon S.V."/>
        </authorList>
    </citation>
    <scope>NUCLEOTIDE SEQUENCE [LARGE SCALE GENOMIC DNA]</scope>
    <scope>GENOME REANNOTATION</scope>
    <source>
        <strain>ATCC BAA-935 / AF2122/97</strain>
    </source>
</reference>
<reference key="4">
    <citation type="journal article" date="1997" name="Biochem. Mol. Biol. Int.">
        <title>Cloning and sequencing of the secY gene homolog from Mycobacterium bovis BCG.</title>
        <authorList>
            <person name="Kim J.K."/>
            <person name="Kim J.H."/>
            <person name="Kim S.J."/>
            <person name="Bai G.H."/>
            <person name="Cho S.H."/>
            <person name="Kang S.W."/>
            <person name="Kim Y.S."/>
            <person name="Kim J.W."/>
            <person name="Lee Y.H."/>
            <person name="Lim J.S."/>
            <person name="Lee H.G."/>
            <person name="Choe I.S."/>
            <person name="Chung T.W."/>
            <person name="Park S.N."/>
            <person name="Ahn J.S."/>
            <person name="Choe Y.K."/>
        </authorList>
    </citation>
    <scope>NUCLEOTIDE SEQUENCE [GENOMIC DNA] OF 1-44</scope>
    <source>
        <strain>BCG</strain>
    </source>
</reference>
<comment type="function">
    <text evidence="1">Catalyzes the reversible transfer of the terminal phosphate group between ATP and AMP. Plays an important role in cellular energy homeostasis and in adenine nucleotide metabolism.</text>
</comment>
<comment type="catalytic activity">
    <reaction evidence="1">
        <text>AMP + ATP = 2 ADP</text>
        <dbReference type="Rhea" id="RHEA:12973"/>
        <dbReference type="ChEBI" id="CHEBI:30616"/>
        <dbReference type="ChEBI" id="CHEBI:456215"/>
        <dbReference type="ChEBI" id="CHEBI:456216"/>
        <dbReference type="EC" id="2.7.4.3"/>
    </reaction>
</comment>
<comment type="pathway">
    <text evidence="1">Purine metabolism; AMP biosynthesis via salvage pathway; AMP from ADP: step 1/1.</text>
</comment>
<comment type="subunit">
    <text evidence="1">Monomer.</text>
</comment>
<comment type="subcellular location">
    <subcellularLocation>
        <location evidence="1">Cytoplasm</location>
    </subcellularLocation>
</comment>
<comment type="domain">
    <text evidence="1">Consists of three domains, a large central CORE domain and two small peripheral domains, NMPbind and LID, which undergo movements during catalysis. The LID domain closes over the site of phosphoryl transfer upon ATP binding. Assembling and dissembling the active center during each catalytic cycle provides an effective means to prevent ATP hydrolysis.</text>
</comment>
<comment type="similarity">
    <text evidence="1">Belongs to the adenylate kinase family.</text>
</comment>
<accession>P69439</accession>
<accession>A0A1R3XX90</accession>
<accession>O53796</accession>
<accession>P94927</accession>
<accession>X2BFZ4</accession>
<proteinExistence type="inferred from homology"/>
<evidence type="ECO:0000255" key="1">
    <source>
        <dbReference type="HAMAP-Rule" id="MF_00235"/>
    </source>
</evidence>
<organism>
    <name type="scientific">Mycobacterium bovis (strain ATCC BAA-935 / AF2122/97)</name>
    <dbReference type="NCBI Taxonomy" id="233413"/>
    <lineage>
        <taxon>Bacteria</taxon>
        <taxon>Bacillati</taxon>
        <taxon>Actinomycetota</taxon>
        <taxon>Actinomycetes</taxon>
        <taxon>Mycobacteriales</taxon>
        <taxon>Mycobacteriaceae</taxon>
        <taxon>Mycobacterium</taxon>
        <taxon>Mycobacterium tuberculosis complex</taxon>
    </lineage>
</organism>
<feature type="chain" id="PRO_0000158794" description="Adenylate kinase">
    <location>
        <begin position="1"/>
        <end position="181"/>
    </location>
</feature>
<feature type="region of interest" description="NMP" evidence="1">
    <location>
        <begin position="30"/>
        <end position="59"/>
    </location>
</feature>
<feature type="region of interest" description="LID" evidence="1">
    <location>
        <begin position="126"/>
        <end position="132"/>
    </location>
</feature>
<feature type="binding site" evidence="1">
    <location>
        <begin position="10"/>
        <end position="15"/>
    </location>
    <ligand>
        <name>ATP</name>
        <dbReference type="ChEBI" id="CHEBI:30616"/>
    </ligand>
</feature>
<feature type="binding site" evidence="1">
    <location>
        <position position="31"/>
    </location>
    <ligand>
        <name>AMP</name>
        <dbReference type="ChEBI" id="CHEBI:456215"/>
    </ligand>
</feature>
<feature type="binding site" evidence="1">
    <location>
        <position position="36"/>
    </location>
    <ligand>
        <name>AMP</name>
        <dbReference type="ChEBI" id="CHEBI:456215"/>
    </ligand>
</feature>
<feature type="binding site" evidence="1">
    <location>
        <begin position="57"/>
        <end position="59"/>
    </location>
    <ligand>
        <name>AMP</name>
        <dbReference type="ChEBI" id="CHEBI:456215"/>
    </ligand>
</feature>
<feature type="binding site" evidence="1">
    <location>
        <begin position="85"/>
        <end position="88"/>
    </location>
    <ligand>
        <name>AMP</name>
        <dbReference type="ChEBI" id="CHEBI:456215"/>
    </ligand>
</feature>
<feature type="binding site" evidence="1">
    <location>
        <position position="92"/>
    </location>
    <ligand>
        <name>AMP</name>
        <dbReference type="ChEBI" id="CHEBI:456215"/>
    </ligand>
</feature>
<feature type="binding site" evidence="1">
    <location>
        <position position="127"/>
    </location>
    <ligand>
        <name>ATP</name>
        <dbReference type="ChEBI" id="CHEBI:30616"/>
    </ligand>
</feature>
<feature type="binding site" evidence="1">
    <location>
        <position position="129"/>
    </location>
    <ligand>
        <name>AMP</name>
        <dbReference type="ChEBI" id="CHEBI:456215"/>
    </ligand>
</feature>
<feature type="binding site" evidence="1">
    <location>
        <position position="140"/>
    </location>
    <ligand>
        <name>AMP</name>
        <dbReference type="ChEBI" id="CHEBI:456215"/>
    </ligand>
</feature>
<feature type="binding site" evidence="1">
    <location>
        <position position="166"/>
    </location>
    <ligand>
        <name>ATP</name>
        <dbReference type="ChEBI" id="CHEBI:30616"/>
    </ligand>
</feature>